<reference key="1">
    <citation type="journal article" date="2010" name="BMC Genomics">
        <title>Comparative venom gland transcriptome analysis of the scorpion Lychas mucronatus reveals intraspecific toxic gene diversity and new venomous components.</title>
        <authorList>
            <person name="Zhao R."/>
            <person name="Ma Y."/>
            <person name="He Y."/>
            <person name="Di Z."/>
            <person name="Wu Y.-L."/>
            <person name="Cao Z.-J."/>
            <person name="Li W.-X."/>
        </authorList>
    </citation>
    <scope>NUCLEOTIDE SEQUENCE [MRNA]</scope>
    <source>
        <strain>Hainan</strain>
        <tissue>Venom gland</tissue>
    </source>
</reference>
<name>KTXH_LYCMC</name>
<proteinExistence type="evidence at transcript level"/>
<accession>D9U2B4</accession>
<dbReference type="EMBL" id="EU163862">
    <property type="protein sequence ID" value="ABY26671.1"/>
    <property type="molecule type" value="mRNA"/>
</dbReference>
<dbReference type="SMR" id="D9U2B4"/>
<dbReference type="GO" id="GO:0005576">
    <property type="term" value="C:extracellular region"/>
    <property type="evidence" value="ECO:0007669"/>
    <property type="project" value="UniProtKB-SubCell"/>
</dbReference>
<dbReference type="GO" id="GO:0099106">
    <property type="term" value="F:ion channel regulator activity"/>
    <property type="evidence" value="ECO:0007669"/>
    <property type="project" value="UniProtKB-KW"/>
</dbReference>
<dbReference type="GO" id="GO:0090729">
    <property type="term" value="F:toxin activity"/>
    <property type="evidence" value="ECO:0007669"/>
    <property type="project" value="UniProtKB-KW"/>
</dbReference>
<sequence length="64" mass="7074">MYATVTVTVLLLISSGIFCQNEKLCSNGGTECNRHCGQNNTVGICHGQNGKLKCECVEYKRKMF</sequence>
<evidence type="ECO:0000250" key="1"/>
<evidence type="ECO:0000255" key="2"/>
<protein>
    <recommendedName>
        <fullName>Putative neurotoxin-H</fullName>
    </recommendedName>
</protein>
<keyword id="KW-1015">Disulfide bond</keyword>
<keyword id="KW-0872">Ion channel impairing toxin</keyword>
<keyword id="KW-0528">Neurotoxin</keyword>
<keyword id="KW-0964">Secreted</keyword>
<keyword id="KW-0732">Signal</keyword>
<keyword id="KW-0800">Toxin</keyword>
<comment type="subcellular location">
    <subcellularLocation>
        <location evidence="1">Secreted</location>
    </subcellularLocation>
</comment>
<comment type="tissue specificity">
    <text>Expressed by the venom gland.</text>
</comment>
<organism>
    <name type="scientific">Lychas mucronatus</name>
    <name type="common">Chinese swimming scorpion</name>
    <dbReference type="NCBI Taxonomy" id="172552"/>
    <lineage>
        <taxon>Eukaryota</taxon>
        <taxon>Metazoa</taxon>
        <taxon>Ecdysozoa</taxon>
        <taxon>Arthropoda</taxon>
        <taxon>Chelicerata</taxon>
        <taxon>Arachnida</taxon>
        <taxon>Scorpiones</taxon>
        <taxon>Buthida</taxon>
        <taxon>Buthoidea</taxon>
        <taxon>Buthidae</taxon>
        <taxon>Lychas</taxon>
    </lineage>
</organism>
<feature type="signal peptide" evidence="2">
    <location>
        <begin position="1"/>
        <end position="19"/>
    </location>
</feature>
<feature type="chain" id="PRO_0000403840" description="Putative neurotoxin-H">
    <location>
        <begin position="20"/>
        <end position="64"/>
    </location>
</feature>
<feature type="disulfide bond" evidence="1">
    <location>
        <begin position="25"/>
        <end position="45"/>
    </location>
</feature>
<feature type="disulfide bond" evidence="1">
    <location>
        <begin position="32"/>
        <end position="54"/>
    </location>
</feature>
<feature type="disulfide bond" evidence="1">
    <location>
        <begin position="36"/>
        <end position="56"/>
    </location>
</feature>